<comment type="function">
    <text evidence="1">F(1)F(0) ATP synthase produces ATP from ADP in the presence of a proton or sodium gradient. F-type ATPases consist of two structural domains, F(1) containing the extramembraneous catalytic core and F(0) containing the membrane proton channel, linked together by a central stalk and a peripheral stalk. During catalysis, ATP synthesis in the catalytic domain of F(1) is coupled via a rotary mechanism of the central stalk subunits to proton translocation.</text>
</comment>
<comment type="function">
    <text evidence="1">Key component of the F(0) channel; it plays a direct role in translocation across the membrane. A homomeric c-ring of between 10-14 subunits forms the central stalk rotor element with the F(1) delta and epsilon subunits.</text>
</comment>
<comment type="subunit">
    <text evidence="1">F-type ATPases have 2 components, F(1) - the catalytic core - and F(0) - the membrane proton channel. F(1) has five subunits: alpha(3), beta(3), gamma(1), delta(1), epsilon(1). F(0) has three main subunits: a(1), b(2) and c(10-14). The alpha and beta chains form an alternating ring which encloses part of the gamma chain. F(1) is attached to F(0) by a central stalk formed by the gamma and epsilon chains, while a peripheral stalk is formed by the delta and b chains.</text>
</comment>
<comment type="subcellular location">
    <subcellularLocation>
        <location evidence="1">Cell membrane</location>
        <topology evidence="1">Multi-pass membrane protein</topology>
    </subcellularLocation>
</comment>
<comment type="similarity">
    <text evidence="1">Belongs to the ATPase C chain family.</text>
</comment>
<evidence type="ECO:0000255" key="1">
    <source>
        <dbReference type="HAMAP-Rule" id="MF_01396"/>
    </source>
</evidence>
<dbReference type="EMBL" id="CP000918">
    <property type="protein sequence ID" value="ACO16880.1"/>
    <property type="molecule type" value="Genomic_DNA"/>
</dbReference>
<dbReference type="RefSeq" id="WP_001054562.1">
    <property type="nucleotide sequence ID" value="NC_012468.1"/>
</dbReference>
<dbReference type="SMR" id="C1C8A5"/>
<dbReference type="KEGG" id="snm:SP70585_1551"/>
<dbReference type="HOGENOM" id="CLU_148047_5_2_9"/>
<dbReference type="Proteomes" id="UP000002211">
    <property type="component" value="Chromosome"/>
</dbReference>
<dbReference type="GO" id="GO:0005886">
    <property type="term" value="C:plasma membrane"/>
    <property type="evidence" value="ECO:0007669"/>
    <property type="project" value="UniProtKB-SubCell"/>
</dbReference>
<dbReference type="GO" id="GO:0045259">
    <property type="term" value="C:proton-transporting ATP synthase complex"/>
    <property type="evidence" value="ECO:0007669"/>
    <property type="project" value="UniProtKB-KW"/>
</dbReference>
<dbReference type="GO" id="GO:0033177">
    <property type="term" value="C:proton-transporting two-sector ATPase complex, proton-transporting domain"/>
    <property type="evidence" value="ECO:0007669"/>
    <property type="project" value="InterPro"/>
</dbReference>
<dbReference type="GO" id="GO:0008289">
    <property type="term" value="F:lipid binding"/>
    <property type="evidence" value="ECO:0007669"/>
    <property type="project" value="UniProtKB-KW"/>
</dbReference>
<dbReference type="GO" id="GO:0046933">
    <property type="term" value="F:proton-transporting ATP synthase activity, rotational mechanism"/>
    <property type="evidence" value="ECO:0007669"/>
    <property type="project" value="UniProtKB-UniRule"/>
</dbReference>
<dbReference type="CDD" id="cd18121">
    <property type="entry name" value="ATP-synt_Fo_c"/>
    <property type="match status" value="1"/>
</dbReference>
<dbReference type="FunFam" id="1.20.20.10:FF:000017">
    <property type="entry name" value="ATP synthase subunit c"/>
    <property type="match status" value="1"/>
</dbReference>
<dbReference type="Gene3D" id="1.20.20.10">
    <property type="entry name" value="F1F0 ATP synthase subunit C"/>
    <property type="match status" value="1"/>
</dbReference>
<dbReference type="HAMAP" id="MF_01396">
    <property type="entry name" value="ATP_synth_c_bact"/>
    <property type="match status" value="1"/>
</dbReference>
<dbReference type="InterPro" id="IPR000454">
    <property type="entry name" value="ATP_synth_F0_csu"/>
</dbReference>
<dbReference type="InterPro" id="IPR020537">
    <property type="entry name" value="ATP_synth_F0_csu_DDCD_BS"/>
</dbReference>
<dbReference type="InterPro" id="IPR038662">
    <property type="entry name" value="ATP_synth_F0_csu_sf"/>
</dbReference>
<dbReference type="InterPro" id="IPR002379">
    <property type="entry name" value="ATPase_proteolipid_c-like_dom"/>
</dbReference>
<dbReference type="InterPro" id="IPR035921">
    <property type="entry name" value="F/V-ATP_Csub_sf"/>
</dbReference>
<dbReference type="NCBIfam" id="NF009997">
    <property type="entry name" value="PRK13467.1"/>
    <property type="match status" value="1"/>
</dbReference>
<dbReference type="Pfam" id="PF00137">
    <property type="entry name" value="ATP-synt_C"/>
    <property type="match status" value="1"/>
</dbReference>
<dbReference type="PRINTS" id="PR00124">
    <property type="entry name" value="ATPASEC"/>
</dbReference>
<dbReference type="SUPFAM" id="SSF81333">
    <property type="entry name" value="F1F0 ATP synthase subunit C"/>
    <property type="match status" value="1"/>
</dbReference>
<dbReference type="PROSITE" id="PS00605">
    <property type="entry name" value="ATPASE_C"/>
    <property type="match status" value="1"/>
</dbReference>
<keyword id="KW-0066">ATP synthesis</keyword>
<keyword id="KW-1003">Cell membrane</keyword>
<keyword id="KW-0138">CF(0)</keyword>
<keyword id="KW-0375">Hydrogen ion transport</keyword>
<keyword id="KW-0406">Ion transport</keyword>
<keyword id="KW-0446">Lipid-binding</keyword>
<keyword id="KW-0472">Membrane</keyword>
<keyword id="KW-0812">Transmembrane</keyword>
<keyword id="KW-1133">Transmembrane helix</keyword>
<keyword id="KW-0813">Transport</keyword>
<feature type="chain" id="PRO_1000215168" description="ATP synthase subunit c">
    <location>
        <begin position="1"/>
        <end position="66"/>
    </location>
</feature>
<feature type="transmembrane region" description="Helical" evidence="1">
    <location>
        <begin position="3"/>
        <end position="23"/>
    </location>
</feature>
<feature type="transmembrane region" description="Helical" evidence="1">
    <location>
        <begin position="45"/>
        <end position="65"/>
    </location>
</feature>
<feature type="site" description="Reversibly protonated during proton transport" evidence="1">
    <location>
        <position position="52"/>
    </location>
</feature>
<name>ATPL_STRP7</name>
<accession>C1C8A5</accession>
<organism>
    <name type="scientific">Streptococcus pneumoniae (strain 70585)</name>
    <dbReference type="NCBI Taxonomy" id="488221"/>
    <lineage>
        <taxon>Bacteria</taxon>
        <taxon>Bacillati</taxon>
        <taxon>Bacillota</taxon>
        <taxon>Bacilli</taxon>
        <taxon>Lactobacillales</taxon>
        <taxon>Streptococcaceae</taxon>
        <taxon>Streptococcus</taxon>
    </lineage>
</organism>
<gene>
    <name evidence="1" type="primary">atpE</name>
    <name type="ordered locus">SP70585_1551</name>
</gene>
<proteinExistence type="inferred from homology"/>
<protein>
    <recommendedName>
        <fullName evidence="1">ATP synthase subunit c</fullName>
    </recommendedName>
    <alternativeName>
        <fullName evidence="1">ATP synthase F(0) sector subunit c</fullName>
    </alternativeName>
    <alternativeName>
        <fullName evidence="1">F-type ATPase subunit c</fullName>
        <shortName evidence="1">F-ATPase subunit c</shortName>
    </alternativeName>
    <alternativeName>
        <fullName evidence="1">Lipid-binding protein</fullName>
    </alternativeName>
</protein>
<reference key="1">
    <citation type="journal article" date="2010" name="Genome Biol.">
        <title>Structure and dynamics of the pan-genome of Streptococcus pneumoniae and closely related species.</title>
        <authorList>
            <person name="Donati C."/>
            <person name="Hiller N.L."/>
            <person name="Tettelin H."/>
            <person name="Muzzi A."/>
            <person name="Croucher N.J."/>
            <person name="Angiuoli S.V."/>
            <person name="Oggioni M."/>
            <person name="Dunning Hotopp J.C."/>
            <person name="Hu F.Z."/>
            <person name="Riley D.R."/>
            <person name="Covacci A."/>
            <person name="Mitchell T.J."/>
            <person name="Bentley S.D."/>
            <person name="Kilian M."/>
            <person name="Ehrlich G.D."/>
            <person name="Rappuoli R."/>
            <person name="Moxon E.R."/>
            <person name="Masignani V."/>
        </authorList>
    </citation>
    <scope>NUCLEOTIDE SEQUENCE [LARGE SCALE GENOMIC DNA]</scope>
    <source>
        <strain>70585</strain>
    </source>
</reference>
<sequence length="66" mass="7260">MNLTFLGLCIACMGVSVGEGLLMNGLFKSVARQPDMLSEFRSLMFLGVAFIEGTFFVTLVFSFIIK</sequence>